<comment type="catalytic activity">
    <reaction evidence="1">
        <text>tRNA(Arg) + L-arginine + ATP = L-arginyl-tRNA(Arg) + AMP + diphosphate</text>
        <dbReference type="Rhea" id="RHEA:20301"/>
        <dbReference type="Rhea" id="RHEA-COMP:9658"/>
        <dbReference type="Rhea" id="RHEA-COMP:9673"/>
        <dbReference type="ChEBI" id="CHEBI:30616"/>
        <dbReference type="ChEBI" id="CHEBI:32682"/>
        <dbReference type="ChEBI" id="CHEBI:33019"/>
        <dbReference type="ChEBI" id="CHEBI:78442"/>
        <dbReference type="ChEBI" id="CHEBI:78513"/>
        <dbReference type="ChEBI" id="CHEBI:456215"/>
        <dbReference type="EC" id="6.1.1.19"/>
    </reaction>
</comment>
<comment type="subunit">
    <text evidence="1">Monomer.</text>
</comment>
<comment type="subcellular location">
    <subcellularLocation>
        <location evidence="1">Cytoplasm</location>
    </subcellularLocation>
</comment>
<comment type="similarity">
    <text evidence="1">Belongs to the class-I aminoacyl-tRNA synthetase family.</text>
</comment>
<organism>
    <name type="scientific">Rhodococcus opacus (strain B4)</name>
    <dbReference type="NCBI Taxonomy" id="632772"/>
    <lineage>
        <taxon>Bacteria</taxon>
        <taxon>Bacillati</taxon>
        <taxon>Actinomycetota</taxon>
        <taxon>Actinomycetes</taxon>
        <taxon>Mycobacteriales</taxon>
        <taxon>Nocardiaceae</taxon>
        <taxon>Rhodococcus</taxon>
    </lineage>
</organism>
<gene>
    <name evidence="1" type="primary">argS</name>
    <name type="ordered locus">ROP_12000</name>
</gene>
<protein>
    <recommendedName>
        <fullName evidence="1">Arginine--tRNA ligase</fullName>
        <ecNumber evidence="1">6.1.1.19</ecNumber>
    </recommendedName>
    <alternativeName>
        <fullName evidence="1">Arginyl-tRNA synthetase</fullName>
        <shortName evidence="1">ArgRS</shortName>
    </alternativeName>
</protein>
<proteinExistence type="inferred from homology"/>
<dbReference type="EC" id="6.1.1.19" evidence="1"/>
<dbReference type="EMBL" id="AP011115">
    <property type="protein sequence ID" value="BAH49447.1"/>
    <property type="molecule type" value="Genomic_DNA"/>
</dbReference>
<dbReference type="RefSeq" id="WP_012688423.1">
    <property type="nucleotide sequence ID" value="NC_012522.1"/>
</dbReference>
<dbReference type="SMR" id="C1AW17"/>
<dbReference type="STRING" id="632772.ROP_12000"/>
<dbReference type="KEGG" id="rop:ROP_12000"/>
<dbReference type="PATRIC" id="fig|632772.20.peg.1271"/>
<dbReference type="HOGENOM" id="CLU_006406_0_1_11"/>
<dbReference type="OrthoDB" id="9803211at2"/>
<dbReference type="Proteomes" id="UP000002212">
    <property type="component" value="Chromosome"/>
</dbReference>
<dbReference type="GO" id="GO:0005737">
    <property type="term" value="C:cytoplasm"/>
    <property type="evidence" value="ECO:0007669"/>
    <property type="project" value="UniProtKB-SubCell"/>
</dbReference>
<dbReference type="GO" id="GO:0004814">
    <property type="term" value="F:arginine-tRNA ligase activity"/>
    <property type="evidence" value="ECO:0007669"/>
    <property type="project" value="UniProtKB-UniRule"/>
</dbReference>
<dbReference type="GO" id="GO:0005524">
    <property type="term" value="F:ATP binding"/>
    <property type="evidence" value="ECO:0007669"/>
    <property type="project" value="UniProtKB-UniRule"/>
</dbReference>
<dbReference type="GO" id="GO:0006420">
    <property type="term" value="P:arginyl-tRNA aminoacylation"/>
    <property type="evidence" value="ECO:0007669"/>
    <property type="project" value="UniProtKB-UniRule"/>
</dbReference>
<dbReference type="CDD" id="cd07956">
    <property type="entry name" value="Anticodon_Ia_Arg"/>
    <property type="match status" value="1"/>
</dbReference>
<dbReference type="CDD" id="cd00671">
    <property type="entry name" value="ArgRS_core"/>
    <property type="match status" value="1"/>
</dbReference>
<dbReference type="FunFam" id="1.10.730.10:FF:000008">
    <property type="entry name" value="Arginine--tRNA ligase"/>
    <property type="match status" value="1"/>
</dbReference>
<dbReference type="FunFam" id="3.40.50.620:FF:000062">
    <property type="entry name" value="Arginine--tRNA ligase"/>
    <property type="match status" value="1"/>
</dbReference>
<dbReference type="Gene3D" id="3.30.1360.70">
    <property type="entry name" value="Arginyl tRNA synthetase N-terminal domain"/>
    <property type="match status" value="1"/>
</dbReference>
<dbReference type="Gene3D" id="3.40.50.620">
    <property type="entry name" value="HUPs"/>
    <property type="match status" value="1"/>
</dbReference>
<dbReference type="Gene3D" id="1.10.730.10">
    <property type="entry name" value="Isoleucyl-tRNA Synthetase, Domain 1"/>
    <property type="match status" value="1"/>
</dbReference>
<dbReference type="HAMAP" id="MF_00123">
    <property type="entry name" value="Arg_tRNA_synth"/>
    <property type="match status" value="1"/>
</dbReference>
<dbReference type="InterPro" id="IPR001412">
    <property type="entry name" value="aa-tRNA-synth_I_CS"/>
</dbReference>
<dbReference type="InterPro" id="IPR001278">
    <property type="entry name" value="Arg-tRNA-ligase"/>
</dbReference>
<dbReference type="InterPro" id="IPR005148">
    <property type="entry name" value="Arg-tRNA-synth_N"/>
</dbReference>
<dbReference type="InterPro" id="IPR036695">
    <property type="entry name" value="Arg-tRNA-synth_N_sf"/>
</dbReference>
<dbReference type="InterPro" id="IPR035684">
    <property type="entry name" value="ArgRS_core"/>
</dbReference>
<dbReference type="InterPro" id="IPR008909">
    <property type="entry name" value="DALR_anticod-bd"/>
</dbReference>
<dbReference type="InterPro" id="IPR014729">
    <property type="entry name" value="Rossmann-like_a/b/a_fold"/>
</dbReference>
<dbReference type="InterPro" id="IPR009080">
    <property type="entry name" value="tRNAsynth_Ia_anticodon-bd"/>
</dbReference>
<dbReference type="NCBIfam" id="TIGR00456">
    <property type="entry name" value="argS"/>
    <property type="match status" value="1"/>
</dbReference>
<dbReference type="PANTHER" id="PTHR11956:SF5">
    <property type="entry name" value="ARGININE--TRNA LIGASE, CYTOPLASMIC"/>
    <property type="match status" value="1"/>
</dbReference>
<dbReference type="PANTHER" id="PTHR11956">
    <property type="entry name" value="ARGINYL-TRNA SYNTHETASE"/>
    <property type="match status" value="1"/>
</dbReference>
<dbReference type="Pfam" id="PF03485">
    <property type="entry name" value="Arg_tRNA_synt_N"/>
    <property type="match status" value="1"/>
</dbReference>
<dbReference type="Pfam" id="PF05746">
    <property type="entry name" value="DALR_1"/>
    <property type="match status" value="1"/>
</dbReference>
<dbReference type="Pfam" id="PF00750">
    <property type="entry name" value="tRNA-synt_1d"/>
    <property type="match status" value="1"/>
</dbReference>
<dbReference type="PRINTS" id="PR01038">
    <property type="entry name" value="TRNASYNTHARG"/>
</dbReference>
<dbReference type="SMART" id="SM01016">
    <property type="entry name" value="Arg_tRNA_synt_N"/>
    <property type="match status" value="1"/>
</dbReference>
<dbReference type="SMART" id="SM00836">
    <property type="entry name" value="DALR_1"/>
    <property type="match status" value="1"/>
</dbReference>
<dbReference type="SUPFAM" id="SSF47323">
    <property type="entry name" value="Anticodon-binding domain of a subclass of class I aminoacyl-tRNA synthetases"/>
    <property type="match status" value="1"/>
</dbReference>
<dbReference type="SUPFAM" id="SSF55190">
    <property type="entry name" value="Arginyl-tRNA synthetase (ArgRS), N-terminal 'additional' domain"/>
    <property type="match status" value="1"/>
</dbReference>
<dbReference type="SUPFAM" id="SSF52374">
    <property type="entry name" value="Nucleotidylyl transferase"/>
    <property type="match status" value="1"/>
</dbReference>
<dbReference type="PROSITE" id="PS00178">
    <property type="entry name" value="AA_TRNA_LIGASE_I"/>
    <property type="match status" value="1"/>
</dbReference>
<feature type="chain" id="PRO_1000198929" description="Arginine--tRNA ligase">
    <location>
        <begin position="1"/>
        <end position="550"/>
    </location>
</feature>
<feature type="short sequence motif" description="'HIGH' region">
    <location>
        <begin position="130"/>
        <end position="140"/>
    </location>
</feature>
<evidence type="ECO:0000255" key="1">
    <source>
        <dbReference type="HAMAP-Rule" id="MF_00123"/>
    </source>
</evidence>
<accession>C1AW17</accession>
<name>SYR_RHOOB</name>
<keyword id="KW-0030">Aminoacyl-tRNA synthetase</keyword>
<keyword id="KW-0067">ATP-binding</keyword>
<keyword id="KW-0963">Cytoplasm</keyword>
<keyword id="KW-0436">Ligase</keyword>
<keyword id="KW-0547">Nucleotide-binding</keyword>
<keyword id="KW-0648">Protein biosynthesis</keyword>
<reference key="1">
    <citation type="submission" date="2009-03" db="EMBL/GenBank/DDBJ databases">
        <title>Comparison of the complete genome sequences of Rhodococcus erythropolis PR4 and Rhodococcus opacus B4.</title>
        <authorList>
            <person name="Takarada H."/>
            <person name="Sekine M."/>
            <person name="Hosoyama A."/>
            <person name="Yamada R."/>
            <person name="Fujisawa T."/>
            <person name="Omata S."/>
            <person name="Shimizu A."/>
            <person name="Tsukatani N."/>
            <person name="Tanikawa S."/>
            <person name="Fujita N."/>
            <person name="Harayama S."/>
        </authorList>
    </citation>
    <scope>NUCLEOTIDE SEQUENCE [LARGE SCALE GENOMIC DNA]</scope>
    <source>
        <strain>B4</strain>
    </source>
</reference>
<sequence length="550" mass="59108">MTPADLAELLRGTAAKVLAERGLDVSVLPETLTVERPRNPEHGDYATNVAMQVAKKVGTNPRELAGWLADALTAAEGIDSADIAGPGFLNIRLAADAQGAIVAKILEAGAAFGAGHTLDGKKINLEFVSANPTGPIHLGGTRWAAVGDALGRILSTQGAAVTREYYFNDHGAQIDRFSRSLIAAAKGEPAPEDGYAGAYIADIAAQVQQQRPDVLDLPAGEQQEVFRSIGVDLMFAHIKRTLHEFGVDFDVYFHENSLFESGAVEKAVETLKDSGNLFQEDGAWWLKSTDFGDDKDRVVIKSDGNAAYIAGDIAYFQDKRSRGFDLCIYMLGADHHGYIGRLKAAAAAFGDDPDTVEVLIGQMVNLVRDGVAVKMSKRAGTVITLDDLVEAIGVDASRYAMIRSSVDSSIDIDLELWTSTGNENPVYYVQYAHARLSAIARNAADLGIAVTDPDFSLLIAEQEGDLIRTLGEYPRVVTSAANLREPHRIARYLEELAGAYHRFYGACRILPQGDEEVGPLHIARLALCDASRQVLANGLALLGVSAPEQM</sequence>